<proteinExistence type="evidence at protein level"/>
<protein>
    <recommendedName>
        <fullName>Zinc-finger homeodomain protein 14</fullName>
        <shortName>AtZHD14</shortName>
    </recommendedName>
    <alternativeName>
        <fullName>Homeobox protein 32</fullName>
        <shortName>AtHB-32</shortName>
    </alternativeName>
</protein>
<organism>
    <name type="scientific">Arabidopsis thaliana</name>
    <name type="common">Mouse-ear cress</name>
    <dbReference type="NCBI Taxonomy" id="3702"/>
    <lineage>
        <taxon>Eukaryota</taxon>
        <taxon>Viridiplantae</taxon>
        <taxon>Streptophyta</taxon>
        <taxon>Embryophyta</taxon>
        <taxon>Tracheophyta</taxon>
        <taxon>Spermatophyta</taxon>
        <taxon>Magnoliopsida</taxon>
        <taxon>eudicotyledons</taxon>
        <taxon>Gunneridae</taxon>
        <taxon>Pentapetalae</taxon>
        <taxon>rosids</taxon>
        <taxon>malvids</taxon>
        <taxon>Brassicales</taxon>
        <taxon>Brassicaceae</taxon>
        <taxon>Camelineae</taxon>
        <taxon>Arabidopsis</taxon>
    </lineage>
</organism>
<comment type="function">
    <text>Putative transcription factor.</text>
</comment>
<comment type="subunit">
    <text evidence="1 5">Homo- and heterodimer with other ZFHD proteins (By similarity). Interacts with ZHD11.</text>
</comment>
<comment type="interaction">
    <interactant intactId="EBI-1806701">
        <id>Q9LQW3</id>
    </interactant>
    <interactant intactId="EBI-25515709">
        <id>Q9LUJ5</id>
        <label>EBP2</label>
    </interactant>
    <organismsDiffer>false</organismsDiffer>
    <experiments>3</experiments>
</comment>
<comment type="interaction">
    <interactant intactId="EBI-1806701">
        <id>Q9LQW3</id>
    </interactant>
    <interactant intactId="EBI-25524519">
        <id>A0A2H1ZEF6</id>
        <label>IAA15</label>
    </interactant>
    <organismsDiffer>false</organismsDiffer>
    <experiments>3</experiments>
</comment>
<comment type="interaction">
    <interactant intactId="EBI-1806701">
        <id>Q9LQW3</id>
    </interactant>
    <interactant intactId="EBI-632243">
        <id>P93830</id>
        <label>IAA17</label>
    </interactant>
    <organismsDiffer>false</organismsDiffer>
    <experiments>3</experiments>
</comment>
<comment type="interaction">
    <interactant intactId="EBI-1806701">
        <id>Q9LQW3</id>
    </interactant>
    <interactant intactId="EBI-632272">
        <id>O24410</id>
        <label>IAA20</label>
    </interactant>
    <organismsDiffer>false</organismsDiffer>
    <experiments>3</experiments>
</comment>
<comment type="interaction">
    <interactant intactId="EBI-1806701">
        <id>Q9LQW3</id>
    </interactant>
    <interactant intactId="EBI-3946697">
        <id>Q93WC4</id>
        <label>IAA29</label>
    </interactant>
    <organismsDiffer>false</organismsDiffer>
    <experiments>3</experiments>
</comment>
<comment type="interaction">
    <interactant intactId="EBI-1806701">
        <id>Q9LQW3</id>
    </interactant>
    <interactant intactId="EBI-632216">
        <id>Q38827</id>
        <label>IAA9</label>
    </interactant>
    <organismsDiffer>false</organismsDiffer>
    <experiments>4</experiments>
</comment>
<comment type="interaction">
    <interactant intactId="EBI-1806701">
        <id>Q9LQW3</id>
    </interactant>
    <interactant intactId="EBI-541115">
        <id>Q9FNZ4</id>
        <label>NIMIN-3</label>
    </interactant>
    <organismsDiffer>false</organismsDiffer>
    <experiments>3</experiments>
</comment>
<comment type="interaction">
    <interactant intactId="EBI-1806701">
        <id>Q9LQW3</id>
    </interactant>
    <interactant intactId="EBI-1806298">
        <id>Q9FIW9</id>
        <label>ZHD10</label>
    </interactant>
    <organismsDiffer>false</organismsDiffer>
    <experiments>3</experiments>
</comment>
<comment type="subcellular location">
    <subcellularLocation>
        <location evidence="1">Nucleus</location>
    </subcellularLocation>
</comment>
<comment type="tissue specificity">
    <text evidence="5">Mostly expressed in flowers and stems.</text>
</comment>
<comment type="domain">
    <text>The homeodomain differs form the typical one by having namely 4 instead of 3 extra amino acids inserted in the loop between helix 1 and helix 2.</text>
</comment>
<evidence type="ECO:0000250" key="1"/>
<evidence type="ECO:0000255" key="2"/>
<evidence type="ECO:0000255" key="3">
    <source>
        <dbReference type="PROSITE-ProRule" id="PRU00856"/>
    </source>
</evidence>
<evidence type="ECO:0000256" key="4">
    <source>
        <dbReference type="SAM" id="MobiDB-lite"/>
    </source>
</evidence>
<evidence type="ECO:0000269" key="5">
    <source>
    </source>
</evidence>
<dbReference type="EMBL" id="AC006917">
    <property type="protein sequence ID" value="AAF79220.1"/>
    <property type="molecule type" value="Genomic_DNA"/>
</dbReference>
<dbReference type="EMBL" id="CP002684">
    <property type="protein sequence ID" value="AEE29206.1"/>
    <property type="molecule type" value="Genomic_DNA"/>
</dbReference>
<dbReference type="EMBL" id="BT003942">
    <property type="protein sequence ID" value="AAO41987.1"/>
    <property type="molecule type" value="mRNA"/>
</dbReference>
<dbReference type="EMBL" id="BT005027">
    <property type="protein sequence ID" value="AAO50560.1"/>
    <property type="molecule type" value="mRNA"/>
</dbReference>
<dbReference type="EMBL" id="AY086523">
    <property type="protein sequence ID" value="AAM63522.1"/>
    <property type="molecule type" value="mRNA"/>
</dbReference>
<dbReference type="RefSeq" id="NP_563956.1">
    <property type="nucleotide sequence ID" value="NM_101337.4"/>
</dbReference>
<dbReference type="SMR" id="Q9LQW3"/>
<dbReference type="BioGRID" id="23273">
    <property type="interactions" value="24"/>
</dbReference>
<dbReference type="IntAct" id="Q9LQW3">
    <property type="interactions" value="27"/>
</dbReference>
<dbReference type="STRING" id="3702.Q9LQW3"/>
<dbReference type="iPTMnet" id="Q9LQW3"/>
<dbReference type="PaxDb" id="3702-AT1G14687.1"/>
<dbReference type="ProteomicsDB" id="242965"/>
<dbReference type="EnsemblPlants" id="AT1G14687.1">
    <property type="protein sequence ID" value="AT1G14687.1"/>
    <property type="gene ID" value="AT1G14687"/>
</dbReference>
<dbReference type="GeneID" id="838033"/>
<dbReference type="Gramene" id="AT1G14687.1">
    <property type="protein sequence ID" value="AT1G14687.1"/>
    <property type="gene ID" value="AT1G14687"/>
</dbReference>
<dbReference type="KEGG" id="ath:AT1G14687"/>
<dbReference type="Araport" id="AT1G14687"/>
<dbReference type="TAIR" id="AT1G14687">
    <property type="gene designation" value="HB32"/>
</dbReference>
<dbReference type="eggNOG" id="ENOG502SVBY">
    <property type="taxonomic scope" value="Eukaryota"/>
</dbReference>
<dbReference type="HOGENOM" id="CLU_039237_2_2_1"/>
<dbReference type="InParanoid" id="Q9LQW3"/>
<dbReference type="OMA" id="MQSSCVY"/>
<dbReference type="OrthoDB" id="1884189at2759"/>
<dbReference type="PhylomeDB" id="Q9LQW3"/>
<dbReference type="PRO" id="PR:Q9LQW3"/>
<dbReference type="Proteomes" id="UP000006548">
    <property type="component" value="Chromosome 1"/>
</dbReference>
<dbReference type="ExpressionAtlas" id="Q9LQW3">
    <property type="expression patterns" value="baseline and differential"/>
</dbReference>
<dbReference type="GO" id="GO:0005634">
    <property type="term" value="C:nucleus"/>
    <property type="evidence" value="ECO:0000250"/>
    <property type="project" value="UniProtKB"/>
</dbReference>
<dbReference type="GO" id="GO:0003677">
    <property type="term" value="F:DNA binding"/>
    <property type="evidence" value="ECO:0000250"/>
    <property type="project" value="TAIR"/>
</dbReference>
<dbReference type="GO" id="GO:0042803">
    <property type="term" value="F:protein homodimerization activity"/>
    <property type="evidence" value="ECO:0000250"/>
    <property type="project" value="UniProtKB"/>
</dbReference>
<dbReference type="GO" id="GO:0000976">
    <property type="term" value="F:transcription cis-regulatory region binding"/>
    <property type="evidence" value="ECO:0000353"/>
    <property type="project" value="TAIR"/>
</dbReference>
<dbReference type="GO" id="GO:0008270">
    <property type="term" value="F:zinc ion binding"/>
    <property type="evidence" value="ECO:0007669"/>
    <property type="project" value="UniProtKB-KW"/>
</dbReference>
<dbReference type="FunFam" id="1.10.10.60:FF:000793">
    <property type="match status" value="1"/>
</dbReference>
<dbReference type="Gene3D" id="1.10.10.60">
    <property type="entry name" value="Homeodomain-like"/>
    <property type="match status" value="1"/>
</dbReference>
<dbReference type="InterPro" id="IPR009057">
    <property type="entry name" value="Homeodomain-like_sf"/>
</dbReference>
<dbReference type="InterPro" id="IPR006455">
    <property type="entry name" value="Homeodomain_ZF_HD"/>
</dbReference>
<dbReference type="InterPro" id="IPR006456">
    <property type="entry name" value="ZF_HD_homeobox_Cys/His_dimer"/>
</dbReference>
<dbReference type="NCBIfam" id="TIGR01565">
    <property type="entry name" value="homeo_ZF_HD"/>
    <property type="match status" value="1"/>
</dbReference>
<dbReference type="NCBIfam" id="TIGR01566">
    <property type="entry name" value="ZF_HD_prot_N"/>
    <property type="match status" value="1"/>
</dbReference>
<dbReference type="PANTHER" id="PTHR31948:SF131">
    <property type="entry name" value="ZINC-FINGER HOMEODOMAIN PROTEIN 14"/>
    <property type="match status" value="1"/>
</dbReference>
<dbReference type="PANTHER" id="PTHR31948">
    <property type="entry name" value="ZINC-FINGER HOMEODOMAIN PROTEIN 2"/>
    <property type="match status" value="1"/>
</dbReference>
<dbReference type="Pfam" id="PF04770">
    <property type="entry name" value="ZF-HD_dimer"/>
    <property type="match status" value="1"/>
</dbReference>
<dbReference type="SUPFAM" id="SSF46689">
    <property type="entry name" value="Homeodomain-like"/>
    <property type="match status" value="1"/>
</dbReference>
<dbReference type="PROSITE" id="PS51523">
    <property type="entry name" value="ZF_HD_DIMER"/>
    <property type="match status" value="1"/>
</dbReference>
<gene>
    <name type="primary">ZHD14</name>
    <name type="synonym">HB32</name>
    <name type="ordered locus">At1g14687</name>
    <name type="ORF">F10B6.7</name>
</gene>
<accession>Q9LQW3</accession>
<name>ZHD14_ARATH</name>
<sequence length="168" mass="19923">MQSTCVYRECMRNHAAKLGSYAIDGCREYSQPSTGDLCVACGCHRSYHRRIDVISSPQINHTRFPFTSLRRVKQLARLKWKTAEERNEEEEDDTEETSTEEKMTVQRRRKSKFTAEQREAMKDYAAKLGWTLKDKRALREEIRVFCEGIGVTRYHFKTWVNNNKKFYH</sequence>
<reference key="1">
    <citation type="journal article" date="2000" name="Nature">
        <title>Sequence and analysis of chromosome 1 of the plant Arabidopsis thaliana.</title>
        <authorList>
            <person name="Theologis A."/>
            <person name="Ecker J.R."/>
            <person name="Palm C.J."/>
            <person name="Federspiel N.A."/>
            <person name="Kaul S."/>
            <person name="White O."/>
            <person name="Alonso J."/>
            <person name="Altafi H."/>
            <person name="Araujo R."/>
            <person name="Bowman C.L."/>
            <person name="Brooks S.Y."/>
            <person name="Buehler E."/>
            <person name="Chan A."/>
            <person name="Chao Q."/>
            <person name="Chen H."/>
            <person name="Cheuk R.F."/>
            <person name="Chin C.W."/>
            <person name="Chung M.K."/>
            <person name="Conn L."/>
            <person name="Conway A.B."/>
            <person name="Conway A.R."/>
            <person name="Creasy T.H."/>
            <person name="Dewar K."/>
            <person name="Dunn P."/>
            <person name="Etgu P."/>
            <person name="Feldblyum T.V."/>
            <person name="Feng J.-D."/>
            <person name="Fong B."/>
            <person name="Fujii C.Y."/>
            <person name="Gill J.E."/>
            <person name="Goldsmith A.D."/>
            <person name="Haas B."/>
            <person name="Hansen N.F."/>
            <person name="Hughes B."/>
            <person name="Huizar L."/>
            <person name="Hunter J.L."/>
            <person name="Jenkins J."/>
            <person name="Johnson-Hopson C."/>
            <person name="Khan S."/>
            <person name="Khaykin E."/>
            <person name="Kim C.J."/>
            <person name="Koo H.L."/>
            <person name="Kremenetskaia I."/>
            <person name="Kurtz D.B."/>
            <person name="Kwan A."/>
            <person name="Lam B."/>
            <person name="Langin-Hooper S."/>
            <person name="Lee A."/>
            <person name="Lee J.M."/>
            <person name="Lenz C.A."/>
            <person name="Li J.H."/>
            <person name="Li Y.-P."/>
            <person name="Lin X."/>
            <person name="Liu S.X."/>
            <person name="Liu Z.A."/>
            <person name="Luros J.S."/>
            <person name="Maiti R."/>
            <person name="Marziali A."/>
            <person name="Militscher J."/>
            <person name="Miranda M."/>
            <person name="Nguyen M."/>
            <person name="Nierman W.C."/>
            <person name="Osborne B.I."/>
            <person name="Pai G."/>
            <person name="Peterson J."/>
            <person name="Pham P.K."/>
            <person name="Rizzo M."/>
            <person name="Rooney T."/>
            <person name="Rowley D."/>
            <person name="Sakano H."/>
            <person name="Salzberg S.L."/>
            <person name="Schwartz J.R."/>
            <person name="Shinn P."/>
            <person name="Southwick A.M."/>
            <person name="Sun H."/>
            <person name="Tallon L.J."/>
            <person name="Tambunga G."/>
            <person name="Toriumi M.J."/>
            <person name="Town C.D."/>
            <person name="Utterback T."/>
            <person name="Van Aken S."/>
            <person name="Vaysberg M."/>
            <person name="Vysotskaia V.S."/>
            <person name="Walker M."/>
            <person name="Wu D."/>
            <person name="Yu G."/>
            <person name="Fraser C.M."/>
            <person name="Venter J.C."/>
            <person name="Davis R.W."/>
        </authorList>
    </citation>
    <scope>NUCLEOTIDE SEQUENCE [LARGE SCALE GENOMIC DNA]</scope>
    <source>
        <strain>cv. Columbia</strain>
    </source>
</reference>
<reference key="2">
    <citation type="journal article" date="2017" name="Plant J.">
        <title>Araport11: a complete reannotation of the Arabidopsis thaliana reference genome.</title>
        <authorList>
            <person name="Cheng C.Y."/>
            <person name="Krishnakumar V."/>
            <person name="Chan A.P."/>
            <person name="Thibaud-Nissen F."/>
            <person name="Schobel S."/>
            <person name="Town C.D."/>
        </authorList>
    </citation>
    <scope>GENOME REANNOTATION</scope>
    <source>
        <strain>cv. Columbia</strain>
    </source>
</reference>
<reference key="3">
    <citation type="journal article" date="2003" name="Science">
        <title>Empirical analysis of transcriptional activity in the Arabidopsis genome.</title>
        <authorList>
            <person name="Yamada K."/>
            <person name="Lim J."/>
            <person name="Dale J.M."/>
            <person name="Chen H."/>
            <person name="Shinn P."/>
            <person name="Palm C.J."/>
            <person name="Southwick A.M."/>
            <person name="Wu H.C."/>
            <person name="Kim C.J."/>
            <person name="Nguyen M."/>
            <person name="Pham P.K."/>
            <person name="Cheuk R.F."/>
            <person name="Karlin-Newmann G."/>
            <person name="Liu S.X."/>
            <person name="Lam B."/>
            <person name="Sakano H."/>
            <person name="Wu T."/>
            <person name="Yu G."/>
            <person name="Miranda M."/>
            <person name="Quach H.L."/>
            <person name="Tripp M."/>
            <person name="Chang C.H."/>
            <person name="Lee J.M."/>
            <person name="Toriumi M.J."/>
            <person name="Chan M.M."/>
            <person name="Tang C.C."/>
            <person name="Onodera C.S."/>
            <person name="Deng J.M."/>
            <person name="Akiyama K."/>
            <person name="Ansari Y."/>
            <person name="Arakawa T."/>
            <person name="Banh J."/>
            <person name="Banno F."/>
            <person name="Bowser L."/>
            <person name="Brooks S.Y."/>
            <person name="Carninci P."/>
            <person name="Chao Q."/>
            <person name="Choy N."/>
            <person name="Enju A."/>
            <person name="Goldsmith A.D."/>
            <person name="Gurjal M."/>
            <person name="Hansen N.F."/>
            <person name="Hayashizaki Y."/>
            <person name="Johnson-Hopson C."/>
            <person name="Hsuan V.W."/>
            <person name="Iida K."/>
            <person name="Karnes M."/>
            <person name="Khan S."/>
            <person name="Koesema E."/>
            <person name="Ishida J."/>
            <person name="Jiang P.X."/>
            <person name="Jones T."/>
            <person name="Kawai J."/>
            <person name="Kamiya A."/>
            <person name="Meyers C."/>
            <person name="Nakajima M."/>
            <person name="Narusaka M."/>
            <person name="Seki M."/>
            <person name="Sakurai T."/>
            <person name="Satou M."/>
            <person name="Tamse R."/>
            <person name="Vaysberg M."/>
            <person name="Wallender E.K."/>
            <person name="Wong C."/>
            <person name="Yamamura Y."/>
            <person name="Yuan S."/>
            <person name="Shinozaki K."/>
            <person name="Davis R.W."/>
            <person name="Theologis A."/>
            <person name="Ecker J.R."/>
        </authorList>
    </citation>
    <scope>NUCLEOTIDE SEQUENCE [LARGE SCALE MRNA]</scope>
    <source>
        <strain>cv. Columbia</strain>
    </source>
</reference>
<reference key="4">
    <citation type="submission" date="2002-03" db="EMBL/GenBank/DDBJ databases">
        <title>Full-length cDNA from Arabidopsis thaliana.</title>
        <authorList>
            <person name="Brover V.V."/>
            <person name="Troukhan M.E."/>
            <person name="Alexandrov N.A."/>
            <person name="Lu Y.-P."/>
            <person name="Flavell R.B."/>
            <person name="Feldmann K.A."/>
        </authorList>
    </citation>
    <scope>NUCLEOTIDE SEQUENCE [LARGE SCALE MRNA]</scope>
</reference>
<reference key="5">
    <citation type="journal article" date="2006" name="Plant Physiol.">
        <title>The Arabidopsis zinc finger-homeodomain genes encode proteins with unique biochemical properties that are coordinately expressed during floral development.</title>
        <authorList>
            <person name="Tan Q.K."/>
            <person name="Irish V.F."/>
        </authorList>
    </citation>
    <scope>INTERACTION WITH ZHD11</scope>
    <scope>TISSUE SPECIFICITY</scope>
    <scope>GENE FAMILY</scope>
</reference>
<reference key="6">
    <citation type="journal article" date="2008" name="J. Integr. Plant Biol.">
        <title>Phylogenetic analysis of the plant-specific zinc finger-homeobox and mini zinc finger gene families.</title>
        <authorList>
            <person name="Hu W."/>
            <person name="dePamphilis C.W."/>
            <person name="Ma H."/>
        </authorList>
    </citation>
    <scope>GENE FAMILY</scope>
    <scope>NOMENCLATURE</scope>
</reference>
<reference key="7">
    <citation type="journal article" date="2011" name="J. Biol. Chem.">
        <title>Nuclear import and DNA binding of the ZHD5 transcription factor is modulated by a competitive peptide inhibitor in Arabidopsis.</title>
        <authorList>
            <person name="Hong S.-Y."/>
            <person name="Kim O.-K."/>
            <person name="Kim S.-G."/>
            <person name="Yang M.-S."/>
            <person name="Park C.-M."/>
        </authorList>
    </citation>
    <scope>GENE FAMILY</scope>
    <scope>NOMENCLATURE</scope>
    <source>
        <strain>cv. Columbia</strain>
    </source>
</reference>
<keyword id="KW-0175">Coiled coil</keyword>
<keyword id="KW-0238">DNA-binding</keyword>
<keyword id="KW-0371">Homeobox</keyword>
<keyword id="KW-0479">Metal-binding</keyword>
<keyword id="KW-0539">Nucleus</keyword>
<keyword id="KW-1185">Reference proteome</keyword>
<keyword id="KW-0804">Transcription</keyword>
<keyword id="KW-0805">Transcription regulation</keyword>
<keyword id="KW-0862">Zinc</keyword>
<keyword id="KW-0863">Zinc-finger</keyword>
<feature type="chain" id="PRO_0000426027" description="Zinc-finger homeodomain protein 14">
    <location>
        <begin position="1"/>
        <end position="168"/>
    </location>
</feature>
<feature type="zinc finger region" description="ZF-HD dimerization-type; degenerate" evidence="3">
    <location>
        <begin position="7"/>
        <end position="51"/>
    </location>
</feature>
<feature type="DNA-binding region" description="Homeobox">
    <location>
        <begin position="106"/>
        <end position="168"/>
    </location>
</feature>
<feature type="region of interest" description="Disordered" evidence="4">
    <location>
        <begin position="82"/>
        <end position="112"/>
    </location>
</feature>
<feature type="coiled-coil region" evidence="2">
    <location>
        <begin position="76"/>
        <end position="103"/>
    </location>
</feature>
<feature type="compositionally biased region" description="Acidic residues" evidence="4">
    <location>
        <begin position="86"/>
        <end position="98"/>
    </location>
</feature>
<feature type="site" description="Required for DNA-binding" evidence="1">
    <location>
        <position position="160"/>
    </location>
</feature>